<name>ISPG_NEIM0</name>
<gene>
    <name evidence="1" type="primary">ispG</name>
    <name type="ordered locus">NMCC_1223</name>
</gene>
<dbReference type="EC" id="1.17.7.3" evidence="1"/>
<dbReference type="EMBL" id="CP000381">
    <property type="protein sequence ID" value="ABX73396.1"/>
    <property type="molecule type" value="Genomic_DNA"/>
</dbReference>
<dbReference type="RefSeq" id="WP_002232580.1">
    <property type="nucleotide sequence ID" value="NC_010120.1"/>
</dbReference>
<dbReference type="SMR" id="A9LZN8"/>
<dbReference type="GeneID" id="93385889"/>
<dbReference type="KEGG" id="nmn:NMCC_1223"/>
<dbReference type="HOGENOM" id="CLU_042258_1_0_4"/>
<dbReference type="UniPathway" id="UPA00056">
    <property type="reaction ID" value="UER00096"/>
</dbReference>
<dbReference type="Proteomes" id="UP000001177">
    <property type="component" value="Chromosome"/>
</dbReference>
<dbReference type="GO" id="GO:0051539">
    <property type="term" value="F:4 iron, 4 sulfur cluster binding"/>
    <property type="evidence" value="ECO:0007669"/>
    <property type="project" value="UniProtKB-UniRule"/>
</dbReference>
<dbReference type="GO" id="GO:0046429">
    <property type="term" value="F:4-hydroxy-3-methylbut-2-en-1-yl diphosphate synthase activity (ferredoxin)"/>
    <property type="evidence" value="ECO:0007669"/>
    <property type="project" value="UniProtKB-UniRule"/>
</dbReference>
<dbReference type="GO" id="GO:0141197">
    <property type="term" value="F:4-hydroxy-3-methylbut-2-enyl-diphosphate synthase activity (flavodoxin)"/>
    <property type="evidence" value="ECO:0007669"/>
    <property type="project" value="UniProtKB-EC"/>
</dbReference>
<dbReference type="GO" id="GO:0005506">
    <property type="term" value="F:iron ion binding"/>
    <property type="evidence" value="ECO:0007669"/>
    <property type="project" value="InterPro"/>
</dbReference>
<dbReference type="GO" id="GO:0019288">
    <property type="term" value="P:isopentenyl diphosphate biosynthetic process, methylerythritol 4-phosphate pathway"/>
    <property type="evidence" value="ECO:0007669"/>
    <property type="project" value="UniProtKB-UniRule"/>
</dbReference>
<dbReference type="GO" id="GO:0016114">
    <property type="term" value="P:terpenoid biosynthetic process"/>
    <property type="evidence" value="ECO:0007669"/>
    <property type="project" value="InterPro"/>
</dbReference>
<dbReference type="FunFam" id="3.20.20.20:FF:000001">
    <property type="entry name" value="4-hydroxy-3-methylbut-2-en-1-yl diphosphate synthase (flavodoxin)"/>
    <property type="match status" value="1"/>
</dbReference>
<dbReference type="FunFam" id="3.30.413.10:FF:000012">
    <property type="entry name" value="4-hydroxy-3-methylbut-2-en-1-yl diphosphate synthase (flavodoxin)"/>
    <property type="match status" value="1"/>
</dbReference>
<dbReference type="Gene3D" id="3.20.20.20">
    <property type="entry name" value="Dihydropteroate synthase-like"/>
    <property type="match status" value="1"/>
</dbReference>
<dbReference type="Gene3D" id="3.30.413.10">
    <property type="entry name" value="Sulfite Reductase Hemoprotein, domain 1"/>
    <property type="match status" value="1"/>
</dbReference>
<dbReference type="HAMAP" id="MF_00159">
    <property type="entry name" value="IspG"/>
    <property type="match status" value="1"/>
</dbReference>
<dbReference type="InterPro" id="IPR011005">
    <property type="entry name" value="Dihydropteroate_synth-like_sf"/>
</dbReference>
<dbReference type="InterPro" id="IPR016425">
    <property type="entry name" value="IspG_bac"/>
</dbReference>
<dbReference type="InterPro" id="IPR004588">
    <property type="entry name" value="IspG_bac-typ"/>
</dbReference>
<dbReference type="InterPro" id="IPR045854">
    <property type="entry name" value="NO2/SO3_Rdtase_4Fe4S_sf"/>
</dbReference>
<dbReference type="NCBIfam" id="TIGR00612">
    <property type="entry name" value="ispG_gcpE"/>
    <property type="match status" value="1"/>
</dbReference>
<dbReference type="NCBIfam" id="NF001540">
    <property type="entry name" value="PRK00366.1"/>
    <property type="match status" value="1"/>
</dbReference>
<dbReference type="PANTHER" id="PTHR30454">
    <property type="entry name" value="4-HYDROXY-3-METHYLBUT-2-EN-1-YL DIPHOSPHATE SYNTHASE"/>
    <property type="match status" value="1"/>
</dbReference>
<dbReference type="PANTHER" id="PTHR30454:SF0">
    <property type="entry name" value="4-HYDROXY-3-METHYLBUT-2-EN-1-YL DIPHOSPHATE SYNTHASE (FERREDOXIN), CHLOROPLASTIC"/>
    <property type="match status" value="1"/>
</dbReference>
<dbReference type="Pfam" id="PF04551">
    <property type="entry name" value="GcpE"/>
    <property type="match status" value="1"/>
</dbReference>
<dbReference type="PIRSF" id="PIRSF004640">
    <property type="entry name" value="IspG"/>
    <property type="match status" value="1"/>
</dbReference>
<dbReference type="SUPFAM" id="SSF56014">
    <property type="entry name" value="Nitrite and sulphite reductase 4Fe-4S domain-like"/>
    <property type="match status" value="1"/>
</dbReference>
<feature type="chain" id="PRO_1000076890" description="4-hydroxy-3-methylbut-2-en-1-yl diphosphate synthase (flavodoxin)">
    <location>
        <begin position="1"/>
        <end position="421"/>
    </location>
</feature>
<feature type="binding site" evidence="1">
    <location>
        <position position="298"/>
    </location>
    <ligand>
        <name>[4Fe-4S] cluster</name>
        <dbReference type="ChEBI" id="CHEBI:49883"/>
    </ligand>
</feature>
<feature type="binding site" evidence="1">
    <location>
        <position position="301"/>
    </location>
    <ligand>
        <name>[4Fe-4S] cluster</name>
        <dbReference type="ChEBI" id="CHEBI:49883"/>
    </ligand>
</feature>
<feature type="binding site" evidence="1">
    <location>
        <position position="344"/>
    </location>
    <ligand>
        <name>[4Fe-4S] cluster</name>
        <dbReference type="ChEBI" id="CHEBI:49883"/>
    </ligand>
</feature>
<feature type="binding site" evidence="1">
    <location>
        <position position="351"/>
    </location>
    <ligand>
        <name>[4Fe-4S] cluster</name>
        <dbReference type="ChEBI" id="CHEBI:49883"/>
    </ligand>
</feature>
<reference key="1">
    <citation type="journal article" date="2008" name="Genomics">
        <title>Characterization of ST-4821 complex, a unique Neisseria meningitidis clone.</title>
        <authorList>
            <person name="Peng J."/>
            <person name="Yang L."/>
            <person name="Yang F."/>
            <person name="Yang J."/>
            <person name="Yan Y."/>
            <person name="Nie H."/>
            <person name="Zhang X."/>
            <person name="Xiong Z."/>
            <person name="Jiang Y."/>
            <person name="Cheng F."/>
            <person name="Xu X."/>
            <person name="Chen S."/>
            <person name="Sun L."/>
            <person name="Li W."/>
            <person name="Shen Y."/>
            <person name="Shao Z."/>
            <person name="Liang X."/>
            <person name="Xu J."/>
            <person name="Jin Q."/>
        </authorList>
    </citation>
    <scope>NUCLEOTIDE SEQUENCE [LARGE SCALE GENOMIC DNA]</scope>
    <source>
        <strain>053442</strain>
    </source>
</reference>
<keyword id="KW-0004">4Fe-4S</keyword>
<keyword id="KW-0408">Iron</keyword>
<keyword id="KW-0411">Iron-sulfur</keyword>
<keyword id="KW-0414">Isoprene biosynthesis</keyword>
<keyword id="KW-0479">Metal-binding</keyword>
<keyword id="KW-0560">Oxidoreductase</keyword>
<comment type="function">
    <text evidence="1">Converts 2C-methyl-D-erythritol 2,4-cyclodiphosphate (ME-2,4cPP) into 1-hydroxy-2-methyl-2-(E)-butenyl 4-diphosphate.</text>
</comment>
<comment type="catalytic activity">
    <reaction evidence="1">
        <text>(2E)-4-hydroxy-3-methylbut-2-enyl diphosphate + oxidized [flavodoxin] + H2O + 2 H(+) = 2-C-methyl-D-erythritol 2,4-cyclic diphosphate + reduced [flavodoxin]</text>
        <dbReference type="Rhea" id="RHEA:43604"/>
        <dbReference type="Rhea" id="RHEA-COMP:10622"/>
        <dbReference type="Rhea" id="RHEA-COMP:10623"/>
        <dbReference type="ChEBI" id="CHEBI:15377"/>
        <dbReference type="ChEBI" id="CHEBI:15378"/>
        <dbReference type="ChEBI" id="CHEBI:57618"/>
        <dbReference type="ChEBI" id="CHEBI:58210"/>
        <dbReference type="ChEBI" id="CHEBI:58483"/>
        <dbReference type="ChEBI" id="CHEBI:128753"/>
        <dbReference type="EC" id="1.17.7.3"/>
    </reaction>
</comment>
<comment type="cofactor">
    <cofactor evidence="1">
        <name>[4Fe-4S] cluster</name>
        <dbReference type="ChEBI" id="CHEBI:49883"/>
    </cofactor>
    <text evidence="1">Binds 1 [4Fe-4S] cluster.</text>
</comment>
<comment type="pathway">
    <text evidence="1">Isoprenoid biosynthesis; isopentenyl diphosphate biosynthesis via DXP pathway; isopentenyl diphosphate from 1-deoxy-D-xylulose 5-phosphate: step 5/6.</text>
</comment>
<comment type="similarity">
    <text evidence="1">Belongs to the IspG family.</text>
</comment>
<organism>
    <name type="scientific">Neisseria meningitidis serogroup C (strain 053442)</name>
    <dbReference type="NCBI Taxonomy" id="374833"/>
    <lineage>
        <taxon>Bacteria</taxon>
        <taxon>Pseudomonadati</taxon>
        <taxon>Pseudomonadota</taxon>
        <taxon>Betaproteobacteria</taxon>
        <taxon>Neisseriales</taxon>
        <taxon>Neisseriaceae</taxon>
        <taxon>Neisseria</taxon>
    </lineage>
</organism>
<proteinExistence type="inferred from homology"/>
<protein>
    <recommendedName>
        <fullName evidence="1">4-hydroxy-3-methylbut-2-en-1-yl diphosphate synthase (flavodoxin)</fullName>
        <ecNumber evidence="1">1.17.7.3</ecNumber>
    </recommendedName>
    <alternativeName>
        <fullName evidence="1">1-hydroxy-2-methyl-2-(E)-butenyl 4-diphosphate synthase</fullName>
    </alternativeName>
</protein>
<evidence type="ECO:0000255" key="1">
    <source>
        <dbReference type="HAMAP-Rule" id="MF_00159"/>
    </source>
</evidence>
<accession>A9LZN8</accession>
<sequence length="421" mass="45373">MNTLQRRKTHQVRIDHITVGSEAPVVIQSMTNTDTADAKATALQIKELSDAGSEMVRITVNSPEAASKVAEIRRRLDDMGYATPLIGDFHFNGERLLAEFPECGKALSKYRINPGNVGKGVKGDEKFAFMIRTAAENDKAVRIGVNWGSLDQSLAKRMMDANLASSAPKPPEEVTKEALIVSALESAEKAVLLGLPEDKIILSCKVSAVQDLIQVYRELGSRCAYPLHLGLTEAGMGSKGIVASTAALSVLLQEGIGDTIRISLTPEPGSPRTQEVVVGQEILQTMGLRSFTPMVTACPGCGRTTSTVFQELAQDVQNYLRQKMSIWRTLYPGVESLNVAVMGCVVNGPGESKLADIGISLPGTGETPVAPVYVDGERKVTLKGDNIATEFLAIVEEYVKTNYGENGSKRNQNKIIPIQSL</sequence>